<reference key="1">
    <citation type="journal article" date="2005" name="Nat. Biotechnol.">
        <title>Complete genome sequence of the plant commensal Pseudomonas fluorescens Pf-5.</title>
        <authorList>
            <person name="Paulsen I.T."/>
            <person name="Press C.M."/>
            <person name="Ravel J."/>
            <person name="Kobayashi D.Y."/>
            <person name="Myers G.S.A."/>
            <person name="Mavrodi D.V."/>
            <person name="DeBoy R.T."/>
            <person name="Seshadri R."/>
            <person name="Ren Q."/>
            <person name="Madupu R."/>
            <person name="Dodson R.J."/>
            <person name="Durkin A.S."/>
            <person name="Brinkac L.M."/>
            <person name="Daugherty S.C."/>
            <person name="Sullivan S.A."/>
            <person name="Rosovitz M.J."/>
            <person name="Gwinn M.L."/>
            <person name="Zhou L."/>
            <person name="Schneider D.J."/>
            <person name="Cartinhour S.W."/>
            <person name="Nelson W.C."/>
            <person name="Weidman J."/>
            <person name="Watkins K."/>
            <person name="Tran K."/>
            <person name="Khouri H."/>
            <person name="Pierson E.A."/>
            <person name="Pierson L.S. III"/>
            <person name="Thomashow L.S."/>
            <person name="Loper J.E."/>
        </authorList>
    </citation>
    <scope>NUCLEOTIDE SEQUENCE [LARGE SCALE GENOMIC DNA]</scope>
    <source>
        <strain>ATCC BAA-477 / NRRL B-23932 / Pf-5</strain>
    </source>
</reference>
<gene>
    <name type="ordered locus">PFL_5802</name>
</gene>
<dbReference type="EMBL" id="CP000076">
    <property type="protein sequence ID" value="AAY94992.1"/>
    <property type="molecule type" value="Genomic_DNA"/>
</dbReference>
<dbReference type="RefSeq" id="WP_011063976.1">
    <property type="nucleotide sequence ID" value="NC_004129.6"/>
</dbReference>
<dbReference type="SMR" id="Q4K4H3"/>
<dbReference type="STRING" id="220664.PFL_5802"/>
<dbReference type="KEGG" id="pfl:PFL_5802"/>
<dbReference type="PATRIC" id="fig|220664.5.peg.5916"/>
<dbReference type="eggNOG" id="COG2353">
    <property type="taxonomic scope" value="Bacteria"/>
</dbReference>
<dbReference type="HOGENOM" id="CLU_071003_1_2_6"/>
<dbReference type="Proteomes" id="UP000008540">
    <property type="component" value="Chromosome"/>
</dbReference>
<dbReference type="GO" id="GO:0042597">
    <property type="term" value="C:periplasmic space"/>
    <property type="evidence" value="ECO:0007669"/>
    <property type="project" value="UniProtKB-SubCell"/>
</dbReference>
<dbReference type="Gene3D" id="2.40.128.110">
    <property type="entry name" value="Lipid/polyisoprenoid-binding, YceI-like"/>
    <property type="match status" value="1"/>
</dbReference>
<dbReference type="HAMAP" id="MF_00780">
    <property type="entry name" value="UPF0312"/>
    <property type="match status" value="1"/>
</dbReference>
<dbReference type="InterPro" id="IPR007372">
    <property type="entry name" value="Lipid/polyisoprenoid-bd_YceI"/>
</dbReference>
<dbReference type="InterPro" id="IPR036761">
    <property type="entry name" value="TTHA0802/YceI-like_sf"/>
</dbReference>
<dbReference type="InterPro" id="IPR023480">
    <property type="entry name" value="UPF0312/YceI"/>
</dbReference>
<dbReference type="NCBIfam" id="NF002994">
    <property type="entry name" value="PRK03757.1"/>
    <property type="match status" value="1"/>
</dbReference>
<dbReference type="PANTHER" id="PTHR34406">
    <property type="entry name" value="PROTEIN YCEI"/>
    <property type="match status" value="1"/>
</dbReference>
<dbReference type="PANTHER" id="PTHR34406:SF1">
    <property type="entry name" value="PROTEIN YCEI"/>
    <property type="match status" value="1"/>
</dbReference>
<dbReference type="Pfam" id="PF04264">
    <property type="entry name" value="YceI"/>
    <property type="match status" value="1"/>
</dbReference>
<dbReference type="SMART" id="SM00867">
    <property type="entry name" value="YceI"/>
    <property type="match status" value="1"/>
</dbReference>
<dbReference type="SUPFAM" id="SSF101874">
    <property type="entry name" value="YceI-like"/>
    <property type="match status" value="1"/>
</dbReference>
<comment type="subcellular location">
    <subcellularLocation>
        <location evidence="1">Periplasm</location>
    </subcellularLocation>
</comment>
<comment type="similarity">
    <text evidence="1">Belongs to the UPF0312 family. Type 1 subfamily.</text>
</comment>
<proteinExistence type="inferred from homology"/>
<accession>Q4K4H3</accession>
<protein>
    <recommendedName>
        <fullName evidence="1">UPF0312 protein PFL_5802</fullName>
    </recommendedName>
</protein>
<sequence>MLKKTLAALAIGSAVLAAGQVMAADYVIDKEGQHAFVDFKISHLGYSFITGTFKDLDGKFSFDAAKPEDAKIEVNVRTASVFTNHAERDKHITSKDFLDAGKFADAKFVSTSVKPTGKNADGKLTADVAGDLTLHGVTKPVVVKATFLGEGKDPWGGYRAGFEGTTSINRQDFGKMMDLGPASNNVDLYISFEGVKAK</sequence>
<organism>
    <name type="scientific">Pseudomonas fluorescens (strain ATCC BAA-477 / NRRL B-23932 / Pf-5)</name>
    <dbReference type="NCBI Taxonomy" id="220664"/>
    <lineage>
        <taxon>Bacteria</taxon>
        <taxon>Pseudomonadati</taxon>
        <taxon>Pseudomonadota</taxon>
        <taxon>Gammaproteobacteria</taxon>
        <taxon>Pseudomonadales</taxon>
        <taxon>Pseudomonadaceae</taxon>
        <taxon>Pseudomonas</taxon>
    </lineage>
</organism>
<feature type="signal peptide" evidence="1">
    <location>
        <begin position="1"/>
        <end position="23"/>
    </location>
</feature>
<feature type="chain" id="PRO_0000226320" description="UPF0312 protein PFL_5802">
    <location>
        <begin position="24"/>
        <end position="198"/>
    </location>
</feature>
<name>Y5802_PSEF5</name>
<evidence type="ECO:0000255" key="1">
    <source>
        <dbReference type="HAMAP-Rule" id="MF_00780"/>
    </source>
</evidence>
<keyword id="KW-0574">Periplasm</keyword>
<keyword id="KW-0732">Signal</keyword>